<sequence length="192" mass="20666">MKALIDAGVVKFGRFVLSSGIESPFYVDLRRALGHPDLVKWVVSGYLSALSRLKFDVLLGVATGGIPYASILGYLLQKPFGYVRAGAKGYGTMQAVEGADVAGLAAVVVDDVLTTGNSLINAIKAVREAGGEVVGALVFLDREQCGSQNVRRETGVEVFSVYKMRELLETLKPYIGEGHYRAAVEYLAKWSC</sequence>
<keyword id="KW-0328">Glycosyltransferase</keyword>
<keyword id="KW-0460">Magnesium</keyword>
<keyword id="KW-0665">Pyrimidine biosynthesis</keyword>
<keyword id="KW-0808">Transferase</keyword>
<comment type="function">
    <text evidence="1">Catalyzes the transfer of a ribosyl phosphate group from 5-phosphoribose 1-diphosphate to orotate, leading to the formation of orotidine monophosphate (OMP).</text>
</comment>
<comment type="catalytic activity">
    <reaction evidence="1">
        <text>orotidine 5'-phosphate + diphosphate = orotate + 5-phospho-alpha-D-ribose 1-diphosphate</text>
        <dbReference type="Rhea" id="RHEA:10380"/>
        <dbReference type="ChEBI" id="CHEBI:30839"/>
        <dbReference type="ChEBI" id="CHEBI:33019"/>
        <dbReference type="ChEBI" id="CHEBI:57538"/>
        <dbReference type="ChEBI" id="CHEBI:58017"/>
        <dbReference type="EC" id="2.4.2.10"/>
    </reaction>
</comment>
<comment type="cofactor">
    <cofactor evidence="1">
        <name>Mg(2+)</name>
        <dbReference type="ChEBI" id="CHEBI:18420"/>
    </cofactor>
</comment>
<comment type="pathway">
    <text evidence="1">Pyrimidine metabolism; UMP biosynthesis via de novo pathway; UMP from orotate: step 1/2.</text>
</comment>
<comment type="subunit">
    <text evidence="1">Homodimer.</text>
</comment>
<comment type="similarity">
    <text evidence="1">Belongs to the purine/pyrimidine phosphoribosyltransferase family. PyrE subfamily.</text>
</comment>
<name>PYRE_PYRCJ</name>
<reference key="1">
    <citation type="submission" date="2007-02" db="EMBL/GenBank/DDBJ databases">
        <title>Complete sequence of Pyrobaculum calidifontis JCM 11548.</title>
        <authorList>
            <consortium name="US DOE Joint Genome Institute"/>
            <person name="Copeland A."/>
            <person name="Lucas S."/>
            <person name="Lapidus A."/>
            <person name="Barry K."/>
            <person name="Glavina del Rio T."/>
            <person name="Dalin E."/>
            <person name="Tice H."/>
            <person name="Pitluck S."/>
            <person name="Chain P."/>
            <person name="Malfatti S."/>
            <person name="Shin M."/>
            <person name="Vergez L."/>
            <person name="Schmutz J."/>
            <person name="Larimer F."/>
            <person name="Land M."/>
            <person name="Hauser L."/>
            <person name="Kyrpides N."/>
            <person name="Mikhailova N."/>
            <person name="Cozen A.E."/>
            <person name="Fitz-Gibbon S.T."/>
            <person name="House C.H."/>
            <person name="Saltikov C."/>
            <person name="Lowe T.M."/>
            <person name="Richardson P."/>
        </authorList>
    </citation>
    <scope>NUCLEOTIDE SEQUENCE [LARGE SCALE GENOMIC DNA]</scope>
    <source>
        <strain>DSM 21063 / JCM 11548 / VA1</strain>
    </source>
</reference>
<evidence type="ECO:0000255" key="1">
    <source>
        <dbReference type="HAMAP-Rule" id="MF_01208"/>
    </source>
</evidence>
<organism>
    <name type="scientific">Pyrobaculum calidifontis (strain DSM 21063 / JCM 11548 / VA1)</name>
    <dbReference type="NCBI Taxonomy" id="410359"/>
    <lineage>
        <taxon>Archaea</taxon>
        <taxon>Thermoproteota</taxon>
        <taxon>Thermoprotei</taxon>
        <taxon>Thermoproteales</taxon>
        <taxon>Thermoproteaceae</taxon>
        <taxon>Pyrobaculum</taxon>
    </lineage>
</organism>
<gene>
    <name evidence="1" type="primary">pyrE</name>
    <name type="ordered locus">Pcal_1777</name>
</gene>
<protein>
    <recommendedName>
        <fullName evidence="1">Orotate phosphoribosyltransferase</fullName>
        <shortName evidence="1">OPRT</shortName>
        <shortName evidence="1">OPRTase</shortName>
        <ecNumber evidence="1">2.4.2.10</ecNumber>
    </recommendedName>
</protein>
<dbReference type="EC" id="2.4.2.10" evidence="1"/>
<dbReference type="EMBL" id="CP000561">
    <property type="protein sequence ID" value="ABO09194.1"/>
    <property type="molecule type" value="Genomic_DNA"/>
</dbReference>
<dbReference type="RefSeq" id="WP_011850453.1">
    <property type="nucleotide sequence ID" value="NC_009073.1"/>
</dbReference>
<dbReference type="SMR" id="A3MX27"/>
<dbReference type="STRING" id="410359.Pcal_1777"/>
<dbReference type="GeneID" id="4909606"/>
<dbReference type="KEGG" id="pcl:Pcal_1777"/>
<dbReference type="eggNOG" id="arCOG00029">
    <property type="taxonomic scope" value="Archaea"/>
</dbReference>
<dbReference type="HOGENOM" id="CLU_074878_2_0_2"/>
<dbReference type="OrthoDB" id="9089at2157"/>
<dbReference type="UniPathway" id="UPA00070">
    <property type="reaction ID" value="UER00119"/>
</dbReference>
<dbReference type="Proteomes" id="UP000001431">
    <property type="component" value="Chromosome"/>
</dbReference>
<dbReference type="GO" id="GO:0000287">
    <property type="term" value="F:magnesium ion binding"/>
    <property type="evidence" value="ECO:0007669"/>
    <property type="project" value="UniProtKB-UniRule"/>
</dbReference>
<dbReference type="GO" id="GO:0004588">
    <property type="term" value="F:orotate phosphoribosyltransferase activity"/>
    <property type="evidence" value="ECO:0007669"/>
    <property type="project" value="UniProtKB-UniRule"/>
</dbReference>
<dbReference type="GO" id="GO:0044205">
    <property type="term" value="P:'de novo' UMP biosynthetic process"/>
    <property type="evidence" value="ECO:0007669"/>
    <property type="project" value="UniProtKB-UniRule"/>
</dbReference>
<dbReference type="GO" id="GO:0019856">
    <property type="term" value="P:pyrimidine nucleobase biosynthetic process"/>
    <property type="evidence" value="ECO:0007669"/>
    <property type="project" value="TreeGrafter"/>
</dbReference>
<dbReference type="CDD" id="cd06223">
    <property type="entry name" value="PRTases_typeI"/>
    <property type="match status" value="1"/>
</dbReference>
<dbReference type="Gene3D" id="3.40.50.2020">
    <property type="match status" value="1"/>
</dbReference>
<dbReference type="HAMAP" id="MF_01208">
    <property type="entry name" value="PyrE"/>
    <property type="match status" value="1"/>
</dbReference>
<dbReference type="InterPro" id="IPR023031">
    <property type="entry name" value="OPRT"/>
</dbReference>
<dbReference type="InterPro" id="IPR004467">
    <property type="entry name" value="Or_phspho_trans_dom"/>
</dbReference>
<dbReference type="InterPro" id="IPR000836">
    <property type="entry name" value="PRibTrfase_dom"/>
</dbReference>
<dbReference type="InterPro" id="IPR029057">
    <property type="entry name" value="PRTase-like"/>
</dbReference>
<dbReference type="NCBIfam" id="TIGR00336">
    <property type="entry name" value="pyrE"/>
    <property type="match status" value="1"/>
</dbReference>
<dbReference type="PANTHER" id="PTHR19278">
    <property type="entry name" value="OROTATE PHOSPHORIBOSYLTRANSFERASE"/>
    <property type="match status" value="1"/>
</dbReference>
<dbReference type="PANTHER" id="PTHR19278:SF9">
    <property type="entry name" value="URIDINE 5'-MONOPHOSPHATE SYNTHASE"/>
    <property type="match status" value="1"/>
</dbReference>
<dbReference type="Pfam" id="PF00156">
    <property type="entry name" value="Pribosyltran"/>
    <property type="match status" value="1"/>
</dbReference>
<dbReference type="SUPFAM" id="SSF53271">
    <property type="entry name" value="PRTase-like"/>
    <property type="match status" value="1"/>
</dbReference>
<dbReference type="PROSITE" id="PS00103">
    <property type="entry name" value="PUR_PYR_PR_TRANSFER"/>
    <property type="match status" value="1"/>
</dbReference>
<feature type="chain" id="PRO_0000298889" description="Orotate phosphoribosyltransferase">
    <location>
        <begin position="1"/>
        <end position="192"/>
    </location>
</feature>
<feature type="binding site" evidence="1">
    <location>
        <position position="84"/>
    </location>
    <ligand>
        <name>5-phospho-alpha-D-ribose 1-diphosphate</name>
        <dbReference type="ChEBI" id="CHEBI:58017"/>
        <note>ligand shared between dimeric partners</note>
    </ligand>
</feature>
<feature type="binding site" evidence="1">
    <location>
        <position position="88"/>
    </location>
    <ligand>
        <name>5-phospho-alpha-D-ribose 1-diphosphate</name>
        <dbReference type="ChEBI" id="CHEBI:58017"/>
        <note>ligand shared between dimeric partners</note>
    </ligand>
</feature>
<feature type="binding site" description="in other chain" evidence="1">
    <location>
        <begin position="110"/>
        <end position="118"/>
    </location>
    <ligand>
        <name>5-phospho-alpha-D-ribose 1-diphosphate</name>
        <dbReference type="ChEBI" id="CHEBI:58017"/>
        <note>ligand shared between dimeric partners</note>
    </ligand>
</feature>
<feature type="binding site" evidence="1">
    <location>
        <position position="114"/>
    </location>
    <ligand>
        <name>orotate</name>
        <dbReference type="ChEBI" id="CHEBI:30839"/>
    </ligand>
</feature>
<feature type="binding site" evidence="1">
    <location>
        <position position="142"/>
    </location>
    <ligand>
        <name>orotate</name>
        <dbReference type="ChEBI" id="CHEBI:30839"/>
    </ligand>
</feature>
<accession>A3MX27</accession>
<proteinExistence type="inferred from homology"/>